<dbReference type="EMBL" id="CP000010">
    <property type="protein sequence ID" value="AAU48802.1"/>
    <property type="molecule type" value="Genomic_DNA"/>
</dbReference>
<dbReference type="RefSeq" id="WP_004189865.1">
    <property type="nucleotide sequence ID" value="NC_006348.1"/>
</dbReference>
<dbReference type="RefSeq" id="YP_102240.1">
    <property type="nucleotide sequence ID" value="NC_006348.1"/>
</dbReference>
<dbReference type="SMR" id="Q62M28"/>
<dbReference type="KEGG" id="bma:BMA0427"/>
<dbReference type="PATRIC" id="fig|243160.12.peg.434"/>
<dbReference type="eggNOG" id="COG0776">
    <property type="taxonomic scope" value="Bacteria"/>
</dbReference>
<dbReference type="HOGENOM" id="CLU_105066_2_0_4"/>
<dbReference type="Proteomes" id="UP000006693">
    <property type="component" value="Chromosome 1"/>
</dbReference>
<dbReference type="GO" id="GO:0005694">
    <property type="term" value="C:chromosome"/>
    <property type="evidence" value="ECO:0007669"/>
    <property type="project" value="InterPro"/>
</dbReference>
<dbReference type="GO" id="GO:0005829">
    <property type="term" value="C:cytosol"/>
    <property type="evidence" value="ECO:0007669"/>
    <property type="project" value="TreeGrafter"/>
</dbReference>
<dbReference type="GO" id="GO:0003677">
    <property type="term" value="F:DNA binding"/>
    <property type="evidence" value="ECO:0007669"/>
    <property type="project" value="UniProtKB-UniRule"/>
</dbReference>
<dbReference type="GO" id="GO:0030527">
    <property type="term" value="F:structural constituent of chromatin"/>
    <property type="evidence" value="ECO:0007669"/>
    <property type="project" value="InterPro"/>
</dbReference>
<dbReference type="GO" id="GO:0006310">
    <property type="term" value="P:DNA recombination"/>
    <property type="evidence" value="ECO:0007669"/>
    <property type="project" value="UniProtKB-UniRule"/>
</dbReference>
<dbReference type="GO" id="GO:0006355">
    <property type="term" value="P:regulation of DNA-templated transcription"/>
    <property type="evidence" value="ECO:0007669"/>
    <property type="project" value="UniProtKB-UniRule"/>
</dbReference>
<dbReference type="GO" id="GO:0006417">
    <property type="term" value="P:regulation of translation"/>
    <property type="evidence" value="ECO:0007669"/>
    <property type="project" value="UniProtKB-UniRule"/>
</dbReference>
<dbReference type="CDD" id="cd13836">
    <property type="entry name" value="IHF_B"/>
    <property type="match status" value="1"/>
</dbReference>
<dbReference type="Gene3D" id="4.10.520.10">
    <property type="entry name" value="IHF-like DNA-binding proteins"/>
    <property type="match status" value="1"/>
</dbReference>
<dbReference type="HAMAP" id="MF_00381">
    <property type="entry name" value="IHF_beta"/>
    <property type="match status" value="1"/>
</dbReference>
<dbReference type="InterPro" id="IPR000119">
    <property type="entry name" value="Hist_DNA-bd"/>
</dbReference>
<dbReference type="InterPro" id="IPR010992">
    <property type="entry name" value="IHF-like_DNA-bd_dom_sf"/>
</dbReference>
<dbReference type="InterPro" id="IPR005685">
    <property type="entry name" value="IHF_beta"/>
</dbReference>
<dbReference type="NCBIfam" id="TIGR00988">
    <property type="entry name" value="hip"/>
    <property type="match status" value="1"/>
</dbReference>
<dbReference type="NCBIfam" id="NF001222">
    <property type="entry name" value="PRK00199.1"/>
    <property type="match status" value="1"/>
</dbReference>
<dbReference type="PANTHER" id="PTHR33175">
    <property type="entry name" value="DNA-BINDING PROTEIN HU"/>
    <property type="match status" value="1"/>
</dbReference>
<dbReference type="PANTHER" id="PTHR33175:SF5">
    <property type="entry name" value="INTEGRATION HOST FACTOR SUBUNIT BETA"/>
    <property type="match status" value="1"/>
</dbReference>
<dbReference type="Pfam" id="PF00216">
    <property type="entry name" value="Bac_DNA_binding"/>
    <property type="match status" value="1"/>
</dbReference>
<dbReference type="PRINTS" id="PR01727">
    <property type="entry name" value="DNABINDINGHU"/>
</dbReference>
<dbReference type="SMART" id="SM00411">
    <property type="entry name" value="BHL"/>
    <property type="match status" value="1"/>
</dbReference>
<dbReference type="SUPFAM" id="SSF47729">
    <property type="entry name" value="IHF-like DNA-binding proteins"/>
    <property type="match status" value="1"/>
</dbReference>
<feature type="chain" id="PRO_1000122196" description="Integration host factor subunit beta">
    <location>
        <begin position="1"/>
        <end position="107"/>
    </location>
</feature>
<feature type="region of interest" description="Disordered" evidence="2">
    <location>
        <begin position="55"/>
        <end position="107"/>
    </location>
</feature>
<feature type="compositionally biased region" description="Basic and acidic residues" evidence="2">
    <location>
        <begin position="65"/>
        <end position="101"/>
    </location>
</feature>
<proteinExistence type="inferred from homology"/>
<accession>Q62M28</accession>
<comment type="function">
    <text evidence="1">This protein is one of the two subunits of integration host factor, a specific DNA-binding protein that functions in genetic recombination as well as in transcriptional and translational control.</text>
</comment>
<comment type="subunit">
    <text evidence="1">Heterodimer of an alpha and a beta chain.</text>
</comment>
<comment type="similarity">
    <text evidence="1">Belongs to the bacterial histone-like protein family.</text>
</comment>
<sequence length="107" mass="11918">MTKSELVAQLASRFPQLVLKDADFAVKTMLDAMSDALSKGHRIEIRGFGSFGLNRRPARVGRNPKSGEKVQVPEKHVPHFKPGKELRERVDGRAGEPLKNDEPEDAQ</sequence>
<organism>
    <name type="scientific">Burkholderia mallei (strain ATCC 23344)</name>
    <dbReference type="NCBI Taxonomy" id="243160"/>
    <lineage>
        <taxon>Bacteria</taxon>
        <taxon>Pseudomonadati</taxon>
        <taxon>Pseudomonadota</taxon>
        <taxon>Betaproteobacteria</taxon>
        <taxon>Burkholderiales</taxon>
        <taxon>Burkholderiaceae</taxon>
        <taxon>Burkholderia</taxon>
        <taxon>pseudomallei group</taxon>
    </lineage>
</organism>
<keyword id="KW-0233">DNA recombination</keyword>
<keyword id="KW-0238">DNA-binding</keyword>
<keyword id="KW-1185">Reference proteome</keyword>
<keyword id="KW-0804">Transcription</keyword>
<keyword id="KW-0805">Transcription regulation</keyword>
<keyword id="KW-0810">Translation regulation</keyword>
<name>IHFB_BURMA</name>
<reference key="1">
    <citation type="journal article" date="2004" name="Proc. Natl. Acad. Sci. U.S.A.">
        <title>Structural flexibility in the Burkholderia mallei genome.</title>
        <authorList>
            <person name="Nierman W.C."/>
            <person name="DeShazer D."/>
            <person name="Kim H.S."/>
            <person name="Tettelin H."/>
            <person name="Nelson K.E."/>
            <person name="Feldblyum T.V."/>
            <person name="Ulrich R.L."/>
            <person name="Ronning C.M."/>
            <person name="Brinkac L.M."/>
            <person name="Daugherty S.C."/>
            <person name="Davidsen T.D."/>
            <person name="DeBoy R.T."/>
            <person name="Dimitrov G."/>
            <person name="Dodson R.J."/>
            <person name="Durkin A.S."/>
            <person name="Gwinn M.L."/>
            <person name="Haft D.H."/>
            <person name="Khouri H.M."/>
            <person name="Kolonay J.F."/>
            <person name="Madupu R."/>
            <person name="Mohammoud Y."/>
            <person name="Nelson W.C."/>
            <person name="Radune D."/>
            <person name="Romero C.M."/>
            <person name="Sarria S."/>
            <person name="Selengut J."/>
            <person name="Shamblin C."/>
            <person name="Sullivan S.A."/>
            <person name="White O."/>
            <person name="Yu Y."/>
            <person name="Zafar N."/>
            <person name="Zhou L."/>
            <person name="Fraser C.M."/>
        </authorList>
    </citation>
    <scope>NUCLEOTIDE SEQUENCE [LARGE SCALE GENOMIC DNA]</scope>
    <source>
        <strain>ATCC 23344</strain>
    </source>
</reference>
<protein>
    <recommendedName>
        <fullName evidence="1">Integration host factor subunit beta</fullName>
        <shortName evidence="1">IHF-beta</shortName>
    </recommendedName>
</protein>
<gene>
    <name evidence="1" type="primary">ihfB</name>
    <name evidence="1" type="synonym">himD</name>
    <name type="ordered locus">BMA0427</name>
</gene>
<evidence type="ECO:0000255" key="1">
    <source>
        <dbReference type="HAMAP-Rule" id="MF_00381"/>
    </source>
</evidence>
<evidence type="ECO:0000256" key="2">
    <source>
        <dbReference type="SAM" id="MobiDB-lite"/>
    </source>
</evidence>